<evidence type="ECO:0000255" key="1">
    <source>
        <dbReference type="HAMAP-Rule" id="MF_01810"/>
    </source>
</evidence>
<gene>
    <name evidence="1" type="primary">yidC</name>
    <name type="ordered locus">APJL_1456</name>
</gene>
<keyword id="KW-0997">Cell inner membrane</keyword>
<keyword id="KW-1003">Cell membrane</keyword>
<keyword id="KW-0143">Chaperone</keyword>
<keyword id="KW-0472">Membrane</keyword>
<keyword id="KW-0653">Protein transport</keyword>
<keyword id="KW-0812">Transmembrane</keyword>
<keyword id="KW-1133">Transmembrane helix</keyword>
<keyword id="KW-0813">Transport</keyword>
<reference key="1">
    <citation type="journal article" date="2008" name="PLoS ONE">
        <title>Genome biology of Actinobacillus pleuropneumoniae JL03, an isolate of serotype 3 prevalent in China.</title>
        <authorList>
            <person name="Xu Z."/>
            <person name="Zhou Y."/>
            <person name="Li L."/>
            <person name="Zhou R."/>
            <person name="Xiao S."/>
            <person name="Wan Y."/>
            <person name="Zhang S."/>
            <person name="Wang K."/>
            <person name="Li W."/>
            <person name="Li L."/>
            <person name="Jin H."/>
            <person name="Kang M."/>
            <person name="Dalai B."/>
            <person name="Li T."/>
            <person name="Liu L."/>
            <person name="Cheng Y."/>
            <person name="Zhang L."/>
            <person name="Xu T."/>
            <person name="Zheng H."/>
            <person name="Pu S."/>
            <person name="Wang B."/>
            <person name="Gu W."/>
            <person name="Zhang X.L."/>
            <person name="Zhu G.-F."/>
            <person name="Wang S."/>
            <person name="Zhao G.-P."/>
            <person name="Chen H."/>
        </authorList>
    </citation>
    <scope>NUCLEOTIDE SEQUENCE [LARGE SCALE GENOMIC DNA]</scope>
    <source>
        <strain>JL03</strain>
    </source>
</reference>
<sequence>MNSNRSLLVMGLLLVSFLIFTQWQQDFNPEIQAQKQAQQQAQVASQSGDVPAASNANTVIAENATQGKTVTLESDVLRLTIDTLGGDVIASDLLAHNAELNSQTPFKLLQTGATTYVAQSGLVGKNGIDTNAGRPQYQVAQDTFVLAEGQNEMSVPMTFEKDGVLYTKTFVLKRGSYDVAVNFNVKNQTAATVEVQPYGQIKYTLLESSGSLTMPTYTGGAYSSAETNYKKYSFQDMEKANLDINTKAGWVALLQHYFVSAWVPNQDAENTIYSRTNNGIATIGYRGPVTTIAPNSEATITSQLWTGPKDQKEMEATAANLDLTVDYGWAWFIAKPLFALLTFIQSIVTNWGLAIIGVTIVVKTILYPLTKAQYTSMARMRMLQPKIQEMRERFGDDRQRMSQEMMKLYKEEKVNPMGGCLPILIQMPIFIALYWTFMEAVELRHAPFFGWIQDLSAQDPYYILPLLMGASMFLLQKMSPSPVTDPVQQKVMTFMPVMFTVFFLWFPSGLVLYWLTSNIITIVQQWLIYRNLEKKGLHSRKK</sequence>
<feature type="chain" id="PRO_1000187623" description="Membrane protein insertase YidC">
    <location>
        <begin position="1"/>
        <end position="542"/>
    </location>
</feature>
<feature type="transmembrane region" description="Helical" evidence="1">
    <location>
        <begin position="7"/>
        <end position="27"/>
    </location>
</feature>
<feature type="transmembrane region" description="Helical" evidence="1">
    <location>
        <begin position="338"/>
        <end position="358"/>
    </location>
</feature>
<feature type="transmembrane region" description="Helical" evidence="1">
    <location>
        <begin position="417"/>
        <end position="437"/>
    </location>
</feature>
<feature type="transmembrane region" description="Helical" evidence="1">
    <location>
        <begin position="455"/>
        <end position="475"/>
    </location>
</feature>
<feature type="transmembrane region" description="Helical" evidence="1">
    <location>
        <begin position="494"/>
        <end position="514"/>
    </location>
</feature>
<comment type="function">
    <text evidence="1">Required for the insertion and/or proper folding and/or complex formation of integral membrane proteins into the membrane. Involved in integration of membrane proteins that insert both dependently and independently of the Sec translocase complex, as well as at least some lipoproteins. Aids folding of multispanning membrane proteins.</text>
</comment>
<comment type="subunit">
    <text evidence="1">Interacts with the Sec translocase complex via SecD. Specifically interacts with transmembrane segments of nascent integral membrane proteins during membrane integration.</text>
</comment>
<comment type="subcellular location">
    <subcellularLocation>
        <location evidence="1">Cell inner membrane</location>
        <topology evidence="1">Multi-pass membrane protein</topology>
    </subcellularLocation>
</comment>
<comment type="similarity">
    <text evidence="1">Belongs to the OXA1/ALB3/YidC family. Type 1 subfamily.</text>
</comment>
<name>YIDC_ACTPJ</name>
<dbReference type="EMBL" id="CP000687">
    <property type="protein sequence ID" value="ABY70008.1"/>
    <property type="molecule type" value="Genomic_DNA"/>
</dbReference>
<dbReference type="RefSeq" id="WP_012263229.1">
    <property type="nucleotide sequence ID" value="NC_010278.1"/>
</dbReference>
<dbReference type="SMR" id="B0BR23"/>
<dbReference type="KEGG" id="apj:APJL_1456"/>
<dbReference type="HOGENOM" id="CLU_016535_3_0_6"/>
<dbReference type="Proteomes" id="UP000008547">
    <property type="component" value="Chromosome"/>
</dbReference>
<dbReference type="GO" id="GO:0005886">
    <property type="term" value="C:plasma membrane"/>
    <property type="evidence" value="ECO:0007669"/>
    <property type="project" value="UniProtKB-SubCell"/>
</dbReference>
<dbReference type="GO" id="GO:0032977">
    <property type="term" value="F:membrane insertase activity"/>
    <property type="evidence" value="ECO:0007669"/>
    <property type="project" value="InterPro"/>
</dbReference>
<dbReference type="GO" id="GO:0051205">
    <property type="term" value="P:protein insertion into membrane"/>
    <property type="evidence" value="ECO:0007669"/>
    <property type="project" value="TreeGrafter"/>
</dbReference>
<dbReference type="GO" id="GO:0015031">
    <property type="term" value="P:protein transport"/>
    <property type="evidence" value="ECO:0007669"/>
    <property type="project" value="UniProtKB-KW"/>
</dbReference>
<dbReference type="CDD" id="cd20070">
    <property type="entry name" value="5TM_YidC_Alb3"/>
    <property type="match status" value="1"/>
</dbReference>
<dbReference type="CDD" id="cd19961">
    <property type="entry name" value="EcYidC-like_peri"/>
    <property type="match status" value="1"/>
</dbReference>
<dbReference type="Gene3D" id="2.70.98.90">
    <property type="match status" value="1"/>
</dbReference>
<dbReference type="HAMAP" id="MF_01810">
    <property type="entry name" value="YidC_type1"/>
    <property type="match status" value="1"/>
</dbReference>
<dbReference type="InterPro" id="IPR019998">
    <property type="entry name" value="Membr_insert_YidC"/>
</dbReference>
<dbReference type="InterPro" id="IPR028053">
    <property type="entry name" value="Membr_insert_YidC_N"/>
</dbReference>
<dbReference type="InterPro" id="IPR001708">
    <property type="entry name" value="YidC/ALB3/OXA1/COX18"/>
</dbReference>
<dbReference type="InterPro" id="IPR028055">
    <property type="entry name" value="YidC/Oxa/ALB_C"/>
</dbReference>
<dbReference type="InterPro" id="IPR047196">
    <property type="entry name" value="YidC_ALB_C"/>
</dbReference>
<dbReference type="InterPro" id="IPR038221">
    <property type="entry name" value="YidC_periplasmic_sf"/>
</dbReference>
<dbReference type="NCBIfam" id="NF002351">
    <property type="entry name" value="PRK01318.1-1"/>
    <property type="match status" value="1"/>
</dbReference>
<dbReference type="NCBIfam" id="NF002352">
    <property type="entry name" value="PRK01318.1-3"/>
    <property type="match status" value="1"/>
</dbReference>
<dbReference type="NCBIfam" id="TIGR03593">
    <property type="entry name" value="yidC_nterm"/>
    <property type="match status" value="1"/>
</dbReference>
<dbReference type="NCBIfam" id="TIGR03592">
    <property type="entry name" value="yidC_oxa1_cterm"/>
    <property type="match status" value="1"/>
</dbReference>
<dbReference type="PANTHER" id="PTHR12428:SF65">
    <property type="entry name" value="CYTOCHROME C OXIDASE ASSEMBLY PROTEIN COX18, MITOCHONDRIAL"/>
    <property type="match status" value="1"/>
</dbReference>
<dbReference type="PANTHER" id="PTHR12428">
    <property type="entry name" value="OXA1"/>
    <property type="match status" value="1"/>
</dbReference>
<dbReference type="Pfam" id="PF02096">
    <property type="entry name" value="60KD_IMP"/>
    <property type="match status" value="1"/>
</dbReference>
<dbReference type="Pfam" id="PF14849">
    <property type="entry name" value="YidC_periplas"/>
    <property type="match status" value="1"/>
</dbReference>
<dbReference type="PRINTS" id="PR00701">
    <property type="entry name" value="60KDINNERMP"/>
</dbReference>
<dbReference type="PRINTS" id="PR01900">
    <property type="entry name" value="YIDCPROTEIN"/>
</dbReference>
<accession>B0BR23</accession>
<organism>
    <name type="scientific">Actinobacillus pleuropneumoniae serotype 3 (strain JL03)</name>
    <dbReference type="NCBI Taxonomy" id="434271"/>
    <lineage>
        <taxon>Bacteria</taxon>
        <taxon>Pseudomonadati</taxon>
        <taxon>Pseudomonadota</taxon>
        <taxon>Gammaproteobacteria</taxon>
        <taxon>Pasteurellales</taxon>
        <taxon>Pasteurellaceae</taxon>
        <taxon>Actinobacillus</taxon>
    </lineage>
</organism>
<protein>
    <recommendedName>
        <fullName evidence="1">Membrane protein insertase YidC</fullName>
    </recommendedName>
    <alternativeName>
        <fullName evidence="1">Foldase YidC</fullName>
    </alternativeName>
    <alternativeName>
        <fullName evidence="1">Membrane integrase YidC</fullName>
    </alternativeName>
    <alternativeName>
        <fullName evidence="1">Membrane protein YidC</fullName>
    </alternativeName>
</protein>
<proteinExistence type="inferred from homology"/>